<protein>
    <recommendedName>
        <fullName evidence="1">2,3-bisphosphoglycerate-dependent phosphoglycerate mutase</fullName>
        <shortName evidence="1">BPG-dependent PGAM</shortName>
        <shortName evidence="1">PGAM</shortName>
        <shortName evidence="1">Phosphoglyceromutase</shortName>
        <shortName evidence="1">dPGM</shortName>
        <ecNumber evidence="1">5.4.2.11</ecNumber>
    </recommendedName>
</protein>
<dbReference type="EC" id="5.4.2.11" evidence="1"/>
<dbReference type="EMBL" id="AM295007">
    <property type="protein sequence ID" value="CAM30029.1"/>
    <property type="molecule type" value="Genomic_DNA"/>
</dbReference>
<dbReference type="RefSeq" id="WP_002983928.1">
    <property type="nucleotide sequence ID" value="NC_009332.1"/>
</dbReference>
<dbReference type="SMR" id="A2RDV4"/>
<dbReference type="KEGG" id="spf:SpyM50696"/>
<dbReference type="HOGENOM" id="CLU_033323_1_5_9"/>
<dbReference type="UniPathway" id="UPA00109">
    <property type="reaction ID" value="UER00186"/>
</dbReference>
<dbReference type="GO" id="GO:0004619">
    <property type="term" value="F:phosphoglycerate mutase activity"/>
    <property type="evidence" value="ECO:0007669"/>
    <property type="project" value="UniProtKB-EC"/>
</dbReference>
<dbReference type="GO" id="GO:0006094">
    <property type="term" value="P:gluconeogenesis"/>
    <property type="evidence" value="ECO:0007669"/>
    <property type="project" value="UniProtKB-UniRule"/>
</dbReference>
<dbReference type="GO" id="GO:0006096">
    <property type="term" value="P:glycolytic process"/>
    <property type="evidence" value="ECO:0007669"/>
    <property type="project" value="UniProtKB-UniRule"/>
</dbReference>
<dbReference type="CDD" id="cd07067">
    <property type="entry name" value="HP_PGM_like"/>
    <property type="match status" value="1"/>
</dbReference>
<dbReference type="FunFam" id="3.40.50.1240:FF:000003">
    <property type="entry name" value="2,3-bisphosphoglycerate-dependent phosphoglycerate mutase"/>
    <property type="match status" value="1"/>
</dbReference>
<dbReference type="Gene3D" id="3.40.50.1240">
    <property type="entry name" value="Phosphoglycerate mutase-like"/>
    <property type="match status" value="1"/>
</dbReference>
<dbReference type="HAMAP" id="MF_01039">
    <property type="entry name" value="PGAM_GpmA"/>
    <property type="match status" value="1"/>
</dbReference>
<dbReference type="InterPro" id="IPR013078">
    <property type="entry name" value="His_Pase_superF_clade-1"/>
</dbReference>
<dbReference type="InterPro" id="IPR029033">
    <property type="entry name" value="His_PPase_superfam"/>
</dbReference>
<dbReference type="InterPro" id="IPR005952">
    <property type="entry name" value="Phosphogly_mut1"/>
</dbReference>
<dbReference type="NCBIfam" id="TIGR01258">
    <property type="entry name" value="pgm_1"/>
    <property type="match status" value="1"/>
</dbReference>
<dbReference type="NCBIfam" id="NF010713">
    <property type="entry name" value="PRK14115.1"/>
    <property type="match status" value="1"/>
</dbReference>
<dbReference type="NCBIfam" id="NF010715">
    <property type="entry name" value="PRK14117.1"/>
    <property type="match status" value="1"/>
</dbReference>
<dbReference type="PANTHER" id="PTHR11931">
    <property type="entry name" value="PHOSPHOGLYCERATE MUTASE"/>
    <property type="match status" value="1"/>
</dbReference>
<dbReference type="Pfam" id="PF00300">
    <property type="entry name" value="His_Phos_1"/>
    <property type="match status" value="1"/>
</dbReference>
<dbReference type="PIRSF" id="PIRSF000709">
    <property type="entry name" value="6PFK_2-Ptase"/>
    <property type="match status" value="1"/>
</dbReference>
<dbReference type="SMART" id="SM00855">
    <property type="entry name" value="PGAM"/>
    <property type="match status" value="1"/>
</dbReference>
<dbReference type="SUPFAM" id="SSF53254">
    <property type="entry name" value="Phosphoglycerate mutase-like"/>
    <property type="match status" value="1"/>
</dbReference>
<accession>A2RDV4</accession>
<organism>
    <name type="scientific">Streptococcus pyogenes serotype M5 (strain Manfredo)</name>
    <dbReference type="NCBI Taxonomy" id="160491"/>
    <lineage>
        <taxon>Bacteria</taxon>
        <taxon>Bacillati</taxon>
        <taxon>Bacillota</taxon>
        <taxon>Bacilli</taxon>
        <taxon>Lactobacillales</taxon>
        <taxon>Streptococcaceae</taxon>
        <taxon>Streptococcus</taxon>
    </lineage>
</organism>
<evidence type="ECO:0000255" key="1">
    <source>
        <dbReference type="HAMAP-Rule" id="MF_01039"/>
    </source>
</evidence>
<feature type="chain" id="PRO_1000064109" description="2,3-bisphosphoglycerate-dependent phosphoglycerate mutase">
    <location>
        <begin position="1"/>
        <end position="231"/>
    </location>
</feature>
<feature type="active site" description="Tele-phosphohistidine intermediate" evidence="1">
    <location>
        <position position="9"/>
    </location>
</feature>
<feature type="active site" description="Proton donor/acceptor" evidence="1">
    <location>
        <position position="87"/>
    </location>
</feature>
<feature type="binding site" evidence="1">
    <location>
        <begin position="8"/>
        <end position="15"/>
    </location>
    <ligand>
        <name>substrate</name>
    </ligand>
</feature>
<feature type="binding site" evidence="1">
    <location>
        <begin position="21"/>
        <end position="22"/>
    </location>
    <ligand>
        <name>substrate</name>
    </ligand>
</feature>
<feature type="binding site" evidence="1">
    <location>
        <position position="60"/>
    </location>
    <ligand>
        <name>substrate</name>
    </ligand>
</feature>
<feature type="binding site" evidence="1">
    <location>
        <begin position="87"/>
        <end position="90"/>
    </location>
    <ligand>
        <name>substrate</name>
    </ligand>
</feature>
<feature type="binding site" evidence="1">
    <location>
        <position position="98"/>
    </location>
    <ligand>
        <name>substrate</name>
    </ligand>
</feature>
<feature type="binding site" evidence="1">
    <location>
        <begin position="114"/>
        <end position="115"/>
    </location>
    <ligand>
        <name>substrate</name>
    </ligand>
</feature>
<feature type="binding site" evidence="1">
    <location>
        <begin position="183"/>
        <end position="184"/>
    </location>
    <ligand>
        <name>substrate</name>
    </ligand>
</feature>
<feature type="site" description="Transition state stabilizer" evidence="1">
    <location>
        <position position="182"/>
    </location>
</feature>
<sequence length="231" mass="26036">MVKLVFARHGESEWNKANLFTGWADVDLSEKGTQQAIDAGKLIKEAGIEFDLAFTSVLTRAIKTTNLALENAGQLWVPTEKSWRLNERHYGALTGKNKAEAAEQFGDEQVHIWRRSYDVLPPAMAKDDEYSAHKDRRYADLDPALIPDAENLKVTLERAMPYWEEKIAPALLDGKNVFVGAHGNSIRALVKHIKGLSDDEIMDVEIPNFPPLVFELDEKLNIVKEYYLGGE</sequence>
<reference key="1">
    <citation type="journal article" date="2007" name="J. Bacteriol.">
        <title>Complete genome of acute rheumatic fever-associated serotype M5 Streptococcus pyogenes strain Manfredo.</title>
        <authorList>
            <person name="Holden M.T.G."/>
            <person name="Scott A."/>
            <person name="Cherevach I."/>
            <person name="Chillingworth T."/>
            <person name="Churcher C."/>
            <person name="Cronin A."/>
            <person name="Dowd L."/>
            <person name="Feltwell T."/>
            <person name="Hamlin N."/>
            <person name="Holroyd S."/>
            <person name="Jagels K."/>
            <person name="Moule S."/>
            <person name="Mungall K."/>
            <person name="Quail M.A."/>
            <person name="Price C."/>
            <person name="Rabbinowitsch E."/>
            <person name="Sharp S."/>
            <person name="Skelton J."/>
            <person name="Whitehead S."/>
            <person name="Barrell B.G."/>
            <person name="Kehoe M."/>
            <person name="Parkhill J."/>
        </authorList>
    </citation>
    <scope>NUCLEOTIDE SEQUENCE [LARGE SCALE GENOMIC DNA]</scope>
    <source>
        <strain>Manfredo</strain>
    </source>
</reference>
<comment type="function">
    <text evidence="1">Catalyzes the interconversion of 2-phosphoglycerate and 3-phosphoglycerate.</text>
</comment>
<comment type="catalytic activity">
    <reaction evidence="1">
        <text>(2R)-2-phosphoglycerate = (2R)-3-phosphoglycerate</text>
        <dbReference type="Rhea" id="RHEA:15901"/>
        <dbReference type="ChEBI" id="CHEBI:58272"/>
        <dbReference type="ChEBI" id="CHEBI:58289"/>
        <dbReference type="EC" id="5.4.2.11"/>
    </reaction>
</comment>
<comment type="pathway">
    <text evidence="1">Carbohydrate degradation; glycolysis; pyruvate from D-glyceraldehyde 3-phosphate: step 3/5.</text>
</comment>
<comment type="similarity">
    <text evidence="1">Belongs to the phosphoglycerate mutase family. BPG-dependent PGAM subfamily.</text>
</comment>
<name>GPMA_STRPG</name>
<keyword id="KW-0312">Gluconeogenesis</keyword>
<keyword id="KW-0324">Glycolysis</keyword>
<keyword id="KW-0413">Isomerase</keyword>
<gene>
    <name evidence="1" type="primary">gpmA</name>
    <name type="ordered locus">SpyM50696</name>
</gene>
<proteinExistence type="inferred from homology"/>